<dbReference type="EC" id="2.1.1.63" evidence="2"/>
<dbReference type="EMBL" id="D90221">
    <property type="protein sequence ID" value="BAA14252.1"/>
    <property type="status" value="ALT_INIT"/>
    <property type="molecule type" value="Genomic_DNA"/>
</dbReference>
<dbReference type="EMBL" id="AE006468">
    <property type="protein sequence ID" value="AAL21167.1"/>
    <property type="molecule type" value="Genomic_DNA"/>
</dbReference>
<dbReference type="PIR" id="A39433">
    <property type="entry name" value="XYEBOT"/>
</dbReference>
<dbReference type="RefSeq" id="NP_461208.1">
    <property type="nucleotide sequence ID" value="NC_003197.2"/>
</dbReference>
<dbReference type="RefSeq" id="WP_000975956.1">
    <property type="nucleotide sequence ID" value="NC_003197.2"/>
</dbReference>
<dbReference type="SMR" id="P26189"/>
<dbReference type="STRING" id="99287.STM2265"/>
<dbReference type="PaxDb" id="99287-STM2265"/>
<dbReference type="GeneID" id="1253787"/>
<dbReference type="KEGG" id="stm:STM2265"/>
<dbReference type="PATRIC" id="fig|99287.12.peg.2399"/>
<dbReference type="HOGENOM" id="CLU_000445_52_0_6"/>
<dbReference type="OMA" id="RFAIGQC"/>
<dbReference type="PhylomeDB" id="P26189"/>
<dbReference type="BioCyc" id="SENT99287:STM2265-MONOMER"/>
<dbReference type="Proteomes" id="UP000001014">
    <property type="component" value="Chromosome"/>
</dbReference>
<dbReference type="GO" id="GO:0003700">
    <property type="term" value="F:DNA-binding transcription factor activity"/>
    <property type="evidence" value="ECO:0007669"/>
    <property type="project" value="InterPro"/>
</dbReference>
<dbReference type="GO" id="GO:0003908">
    <property type="term" value="F:methylated-DNA-[protein]-cysteine S-methyltransferase activity"/>
    <property type="evidence" value="ECO:0007669"/>
    <property type="project" value="UniProtKB-EC"/>
</dbReference>
<dbReference type="GO" id="GO:0043565">
    <property type="term" value="F:sequence-specific DNA binding"/>
    <property type="evidence" value="ECO:0007669"/>
    <property type="project" value="InterPro"/>
</dbReference>
<dbReference type="GO" id="GO:0008270">
    <property type="term" value="F:zinc ion binding"/>
    <property type="evidence" value="ECO:0007669"/>
    <property type="project" value="InterPro"/>
</dbReference>
<dbReference type="GO" id="GO:0006281">
    <property type="term" value="P:DNA repair"/>
    <property type="evidence" value="ECO:0007669"/>
    <property type="project" value="UniProtKB-KW"/>
</dbReference>
<dbReference type="GO" id="GO:0032259">
    <property type="term" value="P:methylation"/>
    <property type="evidence" value="ECO:0007669"/>
    <property type="project" value="UniProtKB-KW"/>
</dbReference>
<dbReference type="CDD" id="cd06445">
    <property type="entry name" value="ATase"/>
    <property type="match status" value="1"/>
</dbReference>
<dbReference type="FunFam" id="1.10.10.10:FF:000410">
    <property type="entry name" value="ADA regulatory protein, putative"/>
    <property type="match status" value="1"/>
</dbReference>
<dbReference type="FunFam" id="3.40.10.10:FF:000001">
    <property type="entry name" value="DNA-3-methyladenine glycosylase 2"/>
    <property type="match status" value="1"/>
</dbReference>
<dbReference type="Gene3D" id="3.40.10.10">
    <property type="entry name" value="DNA Methylphosphotriester Repair Domain"/>
    <property type="match status" value="1"/>
</dbReference>
<dbReference type="Gene3D" id="1.10.10.60">
    <property type="entry name" value="Homeodomain-like"/>
    <property type="match status" value="1"/>
</dbReference>
<dbReference type="Gene3D" id="3.30.160.70">
    <property type="entry name" value="Methylated DNA-protein cysteine methyltransferase domain"/>
    <property type="match status" value="1"/>
</dbReference>
<dbReference type="Gene3D" id="1.10.10.10">
    <property type="entry name" value="Winged helix-like DNA-binding domain superfamily/Winged helix DNA-binding domain"/>
    <property type="match status" value="1"/>
</dbReference>
<dbReference type="InterPro" id="IPR035451">
    <property type="entry name" value="Ada-like_dom_sf"/>
</dbReference>
<dbReference type="InterPro" id="IPR004026">
    <property type="entry name" value="Ada_DNA_repair_Zn-bd"/>
</dbReference>
<dbReference type="InterPro" id="IPR016221">
    <property type="entry name" value="Bifunct_regulatory_prot_Ada"/>
</dbReference>
<dbReference type="InterPro" id="IPR009057">
    <property type="entry name" value="Homeodomain-like_sf"/>
</dbReference>
<dbReference type="InterPro" id="IPR018060">
    <property type="entry name" value="HTH_AraC"/>
</dbReference>
<dbReference type="InterPro" id="IPR018062">
    <property type="entry name" value="HTH_AraC-typ_CS"/>
</dbReference>
<dbReference type="InterPro" id="IPR001497">
    <property type="entry name" value="MethylDNA_cys_MeTrfase_AS"/>
</dbReference>
<dbReference type="InterPro" id="IPR014048">
    <property type="entry name" value="MethylDNA_cys_MeTrfase_DNA-bd"/>
</dbReference>
<dbReference type="InterPro" id="IPR036217">
    <property type="entry name" value="MethylDNA_cys_MeTrfase_DNAb"/>
</dbReference>
<dbReference type="InterPro" id="IPR008332">
    <property type="entry name" value="MethylG_MeTrfase_N"/>
</dbReference>
<dbReference type="InterPro" id="IPR036631">
    <property type="entry name" value="MGMT_N_sf"/>
</dbReference>
<dbReference type="InterPro" id="IPR036388">
    <property type="entry name" value="WH-like_DNA-bd_sf"/>
</dbReference>
<dbReference type="NCBIfam" id="TIGR00589">
    <property type="entry name" value="ogt"/>
    <property type="match status" value="1"/>
</dbReference>
<dbReference type="NCBIfam" id="NF011964">
    <property type="entry name" value="PRK15435.1"/>
    <property type="match status" value="1"/>
</dbReference>
<dbReference type="PANTHER" id="PTHR10815:SF14">
    <property type="entry name" value="BIFUNCTIONAL TRANSCRIPTIONAL ACTIVATOR_DNA REPAIR ENZYME ADA"/>
    <property type="match status" value="1"/>
</dbReference>
<dbReference type="PANTHER" id="PTHR10815">
    <property type="entry name" value="METHYLATED-DNA--PROTEIN-CYSTEINE METHYLTRANSFERASE"/>
    <property type="match status" value="1"/>
</dbReference>
<dbReference type="Pfam" id="PF02805">
    <property type="entry name" value="Ada_Zn_binding"/>
    <property type="match status" value="1"/>
</dbReference>
<dbReference type="Pfam" id="PF01035">
    <property type="entry name" value="DNA_binding_1"/>
    <property type="match status" value="1"/>
</dbReference>
<dbReference type="Pfam" id="PF12833">
    <property type="entry name" value="HTH_18"/>
    <property type="match status" value="1"/>
</dbReference>
<dbReference type="Pfam" id="PF02870">
    <property type="entry name" value="Methyltransf_1N"/>
    <property type="match status" value="1"/>
</dbReference>
<dbReference type="PIRSF" id="PIRSF000409">
    <property type="entry name" value="Ada"/>
    <property type="match status" value="1"/>
</dbReference>
<dbReference type="SMART" id="SM00342">
    <property type="entry name" value="HTH_ARAC"/>
    <property type="match status" value="1"/>
</dbReference>
<dbReference type="SUPFAM" id="SSF57884">
    <property type="entry name" value="Ada DNA repair protein, N-terminal domain (N-Ada 10)"/>
    <property type="match status" value="1"/>
</dbReference>
<dbReference type="SUPFAM" id="SSF46689">
    <property type="entry name" value="Homeodomain-like"/>
    <property type="match status" value="1"/>
</dbReference>
<dbReference type="SUPFAM" id="SSF53155">
    <property type="entry name" value="Methylated DNA-protein cysteine methyltransferase domain"/>
    <property type="match status" value="1"/>
</dbReference>
<dbReference type="SUPFAM" id="SSF46767">
    <property type="entry name" value="Methylated DNA-protein cysteine methyltransferase, C-terminal domain"/>
    <property type="match status" value="1"/>
</dbReference>
<dbReference type="PROSITE" id="PS00041">
    <property type="entry name" value="HTH_ARAC_FAMILY_1"/>
    <property type="match status" value="2"/>
</dbReference>
<dbReference type="PROSITE" id="PS01124">
    <property type="entry name" value="HTH_ARAC_FAMILY_2"/>
    <property type="match status" value="1"/>
</dbReference>
<dbReference type="PROSITE" id="PS00374">
    <property type="entry name" value="MGMT"/>
    <property type="match status" value="1"/>
</dbReference>
<gene>
    <name type="primary">ada</name>
    <name type="ordered locus">STM2265</name>
</gene>
<organism>
    <name type="scientific">Salmonella typhimurium (strain LT2 / SGSC1412 / ATCC 700720)</name>
    <dbReference type="NCBI Taxonomy" id="99287"/>
    <lineage>
        <taxon>Bacteria</taxon>
        <taxon>Pseudomonadati</taxon>
        <taxon>Pseudomonadota</taxon>
        <taxon>Gammaproteobacteria</taxon>
        <taxon>Enterobacterales</taxon>
        <taxon>Enterobacteriaceae</taxon>
        <taxon>Salmonella</taxon>
    </lineage>
</organism>
<proteinExistence type="inferred from homology"/>
<comment type="function">
    <text>Involved in the cellular defense against the biological effects of O6-methylguanine (O6-MeG) and O4-methylthymine (O4-MeT) in DNA. Repairs the methylated nucleobase in DNA by stoichiometrically transferring the methyl group to a cysteine residue in the enzyme. This is a suicide reaction: the enzyme is irreversibly inactivated.</text>
</comment>
<comment type="function">
    <text>The methylated ADA protein acts as a positive regulator of its own synthesis, as well as that of other proteins. The transcription-activating function of the ADA protein resides in its N-terminus. It activates the transcription of alkA, alkB and aidB.</text>
</comment>
<comment type="catalytic activity">
    <reaction evidence="2 4">
        <text>a 6-O-methyl-2'-deoxyguanosine in DNA + L-cysteinyl-[protein] = S-methyl-L-cysteinyl-[protein] + a 2'-deoxyguanosine in DNA</text>
        <dbReference type="Rhea" id="RHEA:24000"/>
        <dbReference type="Rhea" id="RHEA-COMP:10131"/>
        <dbReference type="Rhea" id="RHEA-COMP:10132"/>
        <dbReference type="Rhea" id="RHEA-COMP:11367"/>
        <dbReference type="Rhea" id="RHEA-COMP:11368"/>
        <dbReference type="ChEBI" id="CHEBI:29950"/>
        <dbReference type="ChEBI" id="CHEBI:82612"/>
        <dbReference type="ChEBI" id="CHEBI:85445"/>
        <dbReference type="ChEBI" id="CHEBI:85448"/>
        <dbReference type="EC" id="2.1.1.63"/>
    </reaction>
</comment>
<comment type="catalytic activity">
    <reaction evidence="2 4">
        <text>a 4-O-methyl-thymidine in DNA + L-cysteinyl-[protein] = a thymidine in DNA + S-methyl-L-cysteinyl-[protein]</text>
        <dbReference type="Rhea" id="RHEA:53428"/>
        <dbReference type="Rhea" id="RHEA-COMP:10131"/>
        <dbReference type="Rhea" id="RHEA-COMP:10132"/>
        <dbReference type="Rhea" id="RHEA-COMP:13555"/>
        <dbReference type="Rhea" id="RHEA-COMP:13556"/>
        <dbReference type="ChEBI" id="CHEBI:29950"/>
        <dbReference type="ChEBI" id="CHEBI:82612"/>
        <dbReference type="ChEBI" id="CHEBI:137386"/>
        <dbReference type="ChEBI" id="CHEBI:137387"/>
        <dbReference type="EC" id="2.1.1.63"/>
    </reaction>
</comment>
<comment type="cofactor">
    <cofactor evidence="1">
        <name>Zn(2+)</name>
        <dbReference type="ChEBI" id="CHEBI:29105"/>
    </cofactor>
    <text evidence="1">Binds 1 zinc ion per subunit.</text>
</comment>
<comment type="miscellaneous">
    <text>This enzyme catalyzes only one turnover and therefore is not strictly catalytic. According to one definition, an enzyme is a biocatalyst that acts repeatedly and over many reaction cycles.</text>
</comment>
<comment type="similarity">
    <text evidence="5">In the C-terminal section; belongs to the MGMT family.</text>
</comment>
<comment type="sequence caution" evidence="5">
    <conflict type="erroneous initiation">
        <sequence resource="EMBL-CDS" id="BAA14252"/>
    </conflict>
</comment>
<feature type="chain" id="PRO_0000018749" description="Regulatory protein ada">
    <location>
        <begin position="1"/>
        <end position="353"/>
    </location>
</feature>
<feature type="chain" id="PRO_0000018750" description="Methylated-DNA--protein-cysteine methyltransferase">
    <location>
        <begin position="179"/>
        <end position="353"/>
    </location>
</feature>
<feature type="domain" description="HTH araC/xylS-type" evidence="3">
    <location>
        <begin position="94"/>
        <end position="183"/>
    </location>
</feature>
<feature type="DNA-binding region" description="H-T-H motif" evidence="3">
    <location>
        <begin position="103"/>
        <end position="124"/>
    </location>
</feature>
<feature type="DNA-binding region" description="H-T-H motif" evidence="3">
    <location>
        <begin position="150"/>
        <end position="173"/>
    </location>
</feature>
<feature type="active site" description="Nucleophile; methyl group acceptor from phosphotriester" evidence="4">
    <location>
        <position position="38"/>
    </location>
</feature>
<feature type="active site" description="Nucleophile; methyl group acceptor" evidence="4">
    <location>
        <position position="321"/>
    </location>
</feature>
<feature type="binding site" evidence="1">
    <location>
        <position position="34"/>
    </location>
    <ligand>
        <name>DNA</name>
        <dbReference type="ChEBI" id="CHEBI:16991"/>
    </ligand>
</feature>
<feature type="binding site" evidence="1">
    <location>
        <position position="38"/>
    </location>
    <ligand>
        <name>Zn(2+)</name>
        <dbReference type="ChEBI" id="CHEBI:29105"/>
    </ligand>
</feature>
<feature type="binding site" evidence="1">
    <location>
        <position position="42"/>
    </location>
    <ligand>
        <name>Zn(2+)</name>
        <dbReference type="ChEBI" id="CHEBI:29105"/>
    </ligand>
</feature>
<feature type="binding site" evidence="1">
    <location>
        <position position="43"/>
    </location>
    <ligand>
        <name>DNA</name>
        <dbReference type="ChEBI" id="CHEBI:16991"/>
    </ligand>
</feature>
<feature type="binding site" evidence="1">
    <location>
        <position position="67"/>
    </location>
    <ligand>
        <name>DNA</name>
        <dbReference type="ChEBI" id="CHEBI:16991"/>
    </ligand>
</feature>
<feature type="binding site" evidence="1">
    <location>
        <position position="69"/>
    </location>
    <ligand>
        <name>Zn(2+)</name>
        <dbReference type="ChEBI" id="CHEBI:29105"/>
    </ligand>
</feature>
<feature type="binding site" evidence="1">
    <location>
        <position position="72"/>
    </location>
    <ligand>
        <name>Zn(2+)</name>
        <dbReference type="ChEBI" id="CHEBI:29105"/>
    </ligand>
</feature>
<feature type="site" description="Cleavage" evidence="1">
    <location>
        <begin position="128"/>
        <end position="129"/>
    </location>
</feature>
<feature type="site" description="Cleavage" evidence="1">
    <location>
        <begin position="178"/>
        <end position="179"/>
    </location>
</feature>
<evidence type="ECO:0000250" key="1"/>
<evidence type="ECO:0000250" key="2">
    <source>
        <dbReference type="UniProtKB" id="P06134"/>
    </source>
</evidence>
<evidence type="ECO:0000255" key="3">
    <source>
        <dbReference type="PROSITE-ProRule" id="PRU00593"/>
    </source>
</evidence>
<evidence type="ECO:0000255" key="4">
    <source>
        <dbReference type="PROSITE-ProRule" id="PRU10017"/>
    </source>
</evidence>
<evidence type="ECO:0000305" key="5"/>
<reference key="1">
    <citation type="journal article" date="1991" name="J. Bacteriol.">
        <title>Cloning and characterization of the Salmonella typhimurium ada gene, which encodes O6-methylguanine-DNA methyltransferase.</title>
        <authorList>
            <person name="Hakura A."/>
            <person name="Morimoto K."/>
            <person name="Sofuni T."/>
            <person name="Nohmi T."/>
        </authorList>
    </citation>
    <scope>NUCLEOTIDE SEQUENCE [GENOMIC DNA]</scope>
</reference>
<reference key="2">
    <citation type="journal article" date="2001" name="Nature">
        <title>Complete genome sequence of Salmonella enterica serovar Typhimurium LT2.</title>
        <authorList>
            <person name="McClelland M."/>
            <person name="Sanderson K.E."/>
            <person name="Spieth J."/>
            <person name="Clifton S.W."/>
            <person name="Latreille P."/>
            <person name="Courtney L."/>
            <person name="Porwollik S."/>
            <person name="Ali J."/>
            <person name="Dante M."/>
            <person name="Du F."/>
            <person name="Hou S."/>
            <person name="Layman D."/>
            <person name="Leonard S."/>
            <person name="Nguyen C."/>
            <person name="Scott K."/>
            <person name="Holmes A."/>
            <person name="Grewal N."/>
            <person name="Mulvaney E."/>
            <person name="Ryan E."/>
            <person name="Sun H."/>
            <person name="Florea L."/>
            <person name="Miller W."/>
            <person name="Stoneking T."/>
            <person name="Nhan M."/>
            <person name="Waterston R."/>
            <person name="Wilson R.K."/>
        </authorList>
    </citation>
    <scope>NUCLEOTIDE SEQUENCE [LARGE SCALE GENOMIC DNA]</scope>
    <source>
        <strain>LT2 / SGSC1412 / ATCC 700720</strain>
    </source>
</reference>
<accession>P26189</accession>
<keyword id="KW-0010">Activator</keyword>
<keyword id="KW-0227">DNA damage</keyword>
<keyword id="KW-0234">DNA repair</keyword>
<keyword id="KW-0238">DNA-binding</keyword>
<keyword id="KW-0479">Metal-binding</keyword>
<keyword id="KW-0489">Methyltransferase</keyword>
<keyword id="KW-1185">Reference proteome</keyword>
<keyword id="KW-0804">Transcription</keyword>
<keyword id="KW-0805">Transcription regulation</keyword>
<keyword id="KW-0808">Transferase</keyword>
<keyword id="KW-0862">Zinc</keyword>
<protein>
    <recommendedName>
        <fullName>Regulatory protein ada</fullName>
    </recommendedName>
    <alternativeName>
        <fullName>Regulatory protein of adaptive response</fullName>
    </alternativeName>
    <component>
        <recommendedName>
            <fullName>Methylated-DNA--protein-cysteine methyltransferase</fullName>
            <ecNumber evidence="2">2.1.1.63</ecNumber>
        </recommendedName>
        <alternativeName>
            <fullName>O-6-methylguanine-DNA alkyltransferase</fullName>
        </alternativeName>
    </component>
</protein>
<name>ADA_SALTY</name>
<sequence>MMKKALLIDDECWLRVQARDASADGRFVFAVRTTGVFCRPSCRSKRALRKNVRFFANAQQALDAGFRPCKRCQPDNARAQQRRLDKIACACRLLEQETPVTLAFLAQAVAMSPFHLHRLFKASTGMTPKGWQQAWRARRLREALAKGEPITAAIYRAGFPDSSSYYRHADQTLGMTAKQFRKGGDNVSVRYALTDWVYGRCLVAESERGICAILPGDSDDALLAELHTLFPSARHEPADALFQQRVRQVVAAINTRDVLLSLPLDIQGTAFQQQVWQALCAIPCGETVSYQQLAATIGKPTAVRAVASACGANKLAMVIPCHRVVRRDGALSGYRWGVRRKAQLLKREAQKEE</sequence>